<comment type="function">
    <text evidence="1">Is required not only for elongation of protein synthesis but also for the initiation of all mRNA translation through initiator tRNA(fMet) aminoacylation.</text>
</comment>
<comment type="catalytic activity">
    <reaction evidence="1">
        <text>tRNA(Met) + L-methionine + ATP = L-methionyl-tRNA(Met) + AMP + diphosphate</text>
        <dbReference type="Rhea" id="RHEA:13481"/>
        <dbReference type="Rhea" id="RHEA-COMP:9667"/>
        <dbReference type="Rhea" id="RHEA-COMP:9698"/>
        <dbReference type="ChEBI" id="CHEBI:30616"/>
        <dbReference type="ChEBI" id="CHEBI:33019"/>
        <dbReference type="ChEBI" id="CHEBI:57844"/>
        <dbReference type="ChEBI" id="CHEBI:78442"/>
        <dbReference type="ChEBI" id="CHEBI:78530"/>
        <dbReference type="ChEBI" id="CHEBI:456215"/>
        <dbReference type="EC" id="6.1.1.10"/>
    </reaction>
</comment>
<comment type="cofactor">
    <cofactor evidence="1">
        <name>Zn(2+)</name>
        <dbReference type="ChEBI" id="CHEBI:29105"/>
    </cofactor>
    <text evidence="1">Binds 1 zinc ion per subunit.</text>
</comment>
<comment type="subunit">
    <text evidence="1">Monomer.</text>
</comment>
<comment type="subcellular location">
    <subcellularLocation>
        <location evidence="1">Cytoplasm</location>
    </subcellularLocation>
</comment>
<comment type="similarity">
    <text evidence="1">Belongs to the class-I aminoacyl-tRNA synthetase family. MetG type 1 subfamily.</text>
</comment>
<evidence type="ECO:0000255" key="1">
    <source>
        <dbReference type="HAMAP-Rule" id="MF_00098"/>
    </source>
</evidence>
<name>SYM_CUTAK</name>
<organism>
    <name type="scientific">Cutibacterium acnes (strain DSM 16379 / KPA171202)</name>
    <name type="common">Propionibacterium acnes</name>
    <dbReference type="NCBI Taxonomy" id="267747"/>
    <lineage>
        <taxon>Bacteria</taxon>
        <taxon>Bacillati</taxon>
        <taxon>Actinomycetota</taxon>
        <taxon>Actinomycetes</taxon>
        <taxon>Propionibacteriales</taxon>
        <taxon>Propionibacteriaceae</taxon>
        <taxon>Cutibacterium</taxon>
    </lineage>
</organism>
<gene>
    <name evidence="1" type="primary">metG</name>
    <name type="ordered locus">PPA1728</name>
</gene>
<protein>
    <recommendedName>
        <fullName evidence="1">Methionine--tRNA ligase</fullName>
        <ecNumber evidence="1">6.1.1.10</ecNumber>
    </recommendedName>
    <alternativeName>
        <fullName evidence="1">Methionyl-tRNA synthetase</fullName>
        <shortName evidence="1">MetRS</shortName>
    </alternativeName>
</protein>
<reference key="1">
    <citation type="journal article" date="2004" name="Science">
        <title>The complete genome sequence of Propionibacterium acnes, a commensal of human skin.</title>
        <authorList>
            <person name="Brueggemann H."/>
            <person name="Henne A."/>
            <person name="Hoster F."/>
            <person name="Liesegang H."/>
            <person name="Wiezer A."/>
            <person name="Strittmatter A."/>
            <person name="Hujer S."/>
            <person name="Duerre P."/>
            <person name="Gottschalk G."/>
        </authorList>
    </citation>
    <scope>NUCLEOTIDE SEQUENCE [LARGE SCALE GENOMIC DNA]</scope>
    <source>
        <strain>DSM 16379 / KPA171202</strain>
    </source>
</reference>
<feature type="chain" id="PRO_0000139153" description="Methionine--tRNA ligase">
    <location>
        <begin position="1"/>
        <end position="601"/>
    </location>
</feature>
<feature type="short sequence motif" description="'HIGH' region">
    <location>
        <begin position="21"/>
        <end position="31"/>
    </location>
</feature>
<feature type="binding site" evidence="1">
    <location>
        <position position="153"/>
    </location>
    <ligand>
        <name>Zn(2+)</name>
        <dbReference type="ChEBI" id="CHEBI:29105"/>
    </ligand>
</feature>
<feature type="binding site" evidence="1">
    <location>
        <position position="156"/>
    </location>
    <ligand>
        <name>Zn(2+)</name>
        <dbReference type="ChEBI" id="CHEBI:29105"/>
    </ligand>
</feature>
<feature type="binding site" evidence="1">
    <location>
        <position position="166"/>
    </location>
    <ligand>
        <name>Zn(2+)</name>
        <dbReference type="ChEBI" id="CHEBI:29105"/>
    </ligand>
</feature>
<feature type="binding site" evidence="1">
    <location>
        <position position="169"/>
    </location>
    <ligand>
        <name>Zn(2+)</name>
        <dbReference type="ChEBI" id="CHEBI:29105"/>
    </ligand>
</feature>
<feature type="binding site" evidence="1">
    <location>
        <position position="361"/>
    </location>
    <ligand>
        <name>ATP</name>
        <dbReference type="ChEBI" id="CHEBI:30616"/>
    </ligand>
</feature>
<proteinExistence type="inferred from homology"/>
<keyword id="KW-0030">Aminoacyl-tRNA synthetase</keyword>
<keyword id="KW-0067">ATP-binding</keyword>
<keyword id="KW-0963">Cytoplasm</keyword>
<keyword id="KW-0436">Ligase</keyword>
<keyword id="KW-0479">Metal-binding</keyword>
<keyword id="KW-0547">Nucleotide-binding</keyword>
<keyword id="KW-0648">Protein biosynthesis</keyword>
<keyword id="KW-0862">Zinc</keyword>
<sequence>MSATDRVNLMCANVLAAVAWPYANGPRHIGHVSGFGVPSDVFARYMRMSGHRVLMVSGSDCHGTAISVKADQEGVTAQECAEKYHRIIAADLQGLGLSYDLYTSTLTDNHAHVTQEIFTRLHENGYVVKRSEMGAFEPSTGRTLPDRYIEGTCPVCGYDDARGDQCDNCGRQLDPADLIGPRSKTTGAAPEFRETEHFFLDLPALAESLASWIDTRTDWRPNVLKFSHNLLEELRPRAITRDLDWGIRVPVEGWQDNPMKSIYVWFDAVIGYLSASIEWARRIGRPDAWREFWNDEDARSYYFMGKDNIVFHSVIWPGILLGTNGRGDKGGEPSEELGTLNLPTEIVSSEFLTMSGSKVSNSRGATIFVGDFLHEFGPDALRYFIAVAGPENQDTDFTWEEFVRRVNFELANEWGNLVNRSISMAFKNCHEIPAAGELTDADRELLDAAAAGFDTVGGLLAHARFKAAITEAMRIVGLANAYISAEEPWKLKDNPERRDTVLHVALQVVSDVNTMMTPFMPHSAQKIYEALGGEGVWAAQPELIETDGAPILMGDYATEQASWGRHEITVGTPLSKPSPIFRKLDAKLAQTGPQWAPVNPQ</sequence>
<dbReference type="EC" id="6.1.1.10" evidence="1"/>
<dbReference type="EMBL" id="AE017283">
    <property type="protein sequence ID" value="AAT83457.1"/>
    <property type="molecule type" value="Genomic_DNA"/>
</dbReference>
<dbReference type="SMR" id="Q6A707"/>
<dbReference type="EnsemblBacteria" id="AAT83457">
    <property type="protein sequence ID" value="AAT83457"/>
    <property type="gene ID" value="PPA1728"/>
</dbReference>
<dbReference type="KEGG" id="pac:PPA1728"/>
<dbReference type="eggNOG" id="COG0143">
    <property type="taxonomic scope" value="Bacteria"/>
</dbReference>
<dbReference type="HOGENOM" id="CLU_009710_1_2_11"/>
<dbReference type="Proteomes" id="UP000000603">
    <property type="component" value="Chromosome"/>
</dbReference>
<dbReference type="GO" id="GO:0005829">
    <property type="term" value="C:cytosol"/>
    <property type="evidence" value="ECO:0007669"/>
    <property type="project" value="TreeGrafter"/>
</dbReference>
<dbReference type="GO" id="GO:0005524">
    <property type="term" value="F:ATP binding"/>
    <property type="evidence" value="ECO:0007669"/>
    <property type="project" value="UniProtKB-UniRule"/>
</dbReference>
<dbReference type="GO" id="GO:0046872">
    <property type="term" value="F:metal ion binding"/>
    <property type="evidence" value="ECO:0007669"/>
    <property type="project" value="UniProtKB-KW"/>
</dbReference>
<dbReference type="GO" id="GO:0004825">
    <property type="term" value="F:methionine-tRNA ligase activity"/>
    <property type="evidence" value="ECO:0007669"/>
    <property type="project" value="UniProtKB-UniRule"/>
</dbReference>
<dbReference type="GO" id="GO:0006431">
    <property type="term" value="P:methionyl-tRNA aminoacylation"/>
    <property type="evidence" value="ECO:0007669"/>
    <property type="project" value="UniProtKB-UniRule"/>
</dbReference>
<dbReference type="CDD" id="cd07957">
    <property type="entry name" value="Anticodon_Ia_Met"/>
    <property type="match status" value="1"/>
</dbReference>
<dbReference type="CDD" id="cd00814">
    <property type="entry name" value="MetRS_core"/>
    <property type="match status" value="1"/>
</dbReference>
<dbReference type="FunFam" id="2.20.28.20:FF:000001">
    <property type="entry name" value="Methionine--tRNA ligase"/>
    <property type="match status" value="1"/>
</dbReference>
<dbReference type="Gene3D" id="3.40.50.620">
    <property type="entry name" value="HUPs"/>
    <property type="match status" value="1"/>
</dbReference>
<dbReference type="Gene3D" id="1.10.730.10">
    <property type="entry name" value="Isoleucyl-tRNA Synthetase, Domain 1"/>
    <property type="match status" value="1"/>
</dbReference>
<dbReference type="Gene3D" id="2.20.28.20">
    <property type="entry name" value="Methionyl-tRNA synthetase, Zn-domain"/>
    <property type="match status" value="1"/>
</dbReference>
<dbReference type="HAMAP" id="MF_00098">
    <property type="entry name" value="Met_tRNA_synth_type1"/>
    <property type="match status" value="1"/>
</dbReference>
<dbReference type="InterPro" id="IPR041872">
    <property type="entry name" value="Anticodon_Met"/>
</dbReference>
<dbReference type="InterPro" id="IPR023458">
    <property type="entry name" value="Met-tRNA_ligase_1"/>
</dbReference>
<dbReference type="InterPro" id="IPR014758">
    <property type="entry name" value="Met-tRNA_synth"/>
</dbReference>
<dbReference type="InterPro" id="IPR015413">
    <property type="entry name" value="Methionyl/Leucyl_tRNA_Synth"/>
</dbReference>
<dbReference type="InterPro" id="IPR033911">
    <property type="entry name" value="MetRS_core"/>
</dbReference>
<dbReference type="InterPro" id="IPR029038">
    <property type="entry name" value="MetRS_Zn"/>
</dbReference>
<dbReference type="InterPro" id="IPR014729">
    <property type="entry name" value="Rossmann-like_a/b/a_fold"/>
</dbReference>
<dbReference type="InterPro" id="IPR009080">
    <property type="entry name" value="tRNAsynth_Ia_anticodon-bd"/>
</dbReference>
<dbReference type="NCBIfam" id="TIGR00398">
    <property type="entry name" value="metG"/>
    <property type="match status" value="1"/>
</dbReference>
<dbReference type="PANTHER" id="PTHR45765">
    <property type="entry name" value="METHIONINE--TRNA LIGASE"/>
    <property type="match status" value="1"/>
</dbReference>
<dbReference type="PANTHER" id="PTHR45765:SF1">
    <property type="entry name" value="METHIONINE--TRNA LIGASE, CYTOPLASMIC"/>
    <property type="match status" value="1"/>
</dbReference>
<dbReference type="Pfam" id="PF19303">
    <property type="entry name" value="Anticodon_3"/>
    <property type="match status" value="1"/>
</dbReference>
<dbReference type="Pfam" id="PF09334">
    <property type="entry name" value="tRNA-synt_1g"/>
    <property type="match status" value="1"/>
</dbReference>
<dbReference type="PRINTS" id="PR01041">
    <property type="entry name" value="TRNASYNTHMET"/>
</dbReference>
<dbReference type="SUPFAM" id="SSF47323">
    <property type="entry name" value="Anticodon-binding domain of a subclass of class I aminoacyl-tRNA synthetases"/>
    <property type="match status" value="1"/>
</dbReference>
<dbReference type="SUPFAM" id="SSF57770">
    <property type="entry name" value="Methionyl-tRNA synthetase (MetRS), Zn-domain"/>
    <property type="match status" value="1"/>
</dbReference>
<dbReference type="SUPFAM" id="SSF52374">
    <property type="entry name" value="Nucleotidylyl transferase"/>
    <property type="match status" value="1"/>
</dbReference>
<accession>Q6A707</accession>